<reference key="1">
    <citation type="journal article" date="2004" name="J. Bacteriol.">
        <title>Complete genome sequence of the genetically tractable hydrogenotrophic methanogen Methanococcus maripaludis.</title>
        <authorList>
            <person name="Hendrickson E.L."/>
            <person name="Kaul R."/>
            <person name="Zhou Y."/>
            <person name="Bovee D."/>
            <person name="Chapman P."/>
            <person name="Chung J."/>
            <person name="Conway de Macario E."/>
            <person name="Dodsworth J.A."/>
            <person name="Gillett W."/>
            <person name="Graham D.E."/>
            <person name="Hackett M."/>
            <person name="Haydock A.K."/>
            <person name="Kang A."/>
            <person name="Land M.L."/>
            <person name="Levy R."/>
            <person name="Lie T.J."/>
            <person name="Major T.A."/>
            <person name="Moore B.C."/>
            <person name="Porat I."/>
            <person name="Palmeiri A."/>
            <person name="Rouse G."/>
            <person name="Saenphimmachak C."/>
            <person name="Soell D."/>
            <person name="Van Dien S."/>
            <person name="Wang T."/>
            <person name="Whitman W.B."/>
            <person name="Xia Q."/>
            <person name="Zhang Y."/>
            <person name="Larimer F.W."/>
            <person name="Olson M.V."/>
            <person name="Leigh J.A."/>
        </authorList>
    </citation>
    <scope>NUCLEOTIDE SEQUENCE [LARGE SCALE GENOMIC DNA]</scope>
    <source>
        <strain>DSM 14266 / JCM 13030 / NBRC 101832 / S2 / LL</strain>
    </source>
</reference>
<organism>
    <name type="scientific">Methanococcus maripaludis (strain DSM 14266 / JCM 13030 / NBRC 101832 / S2 / LL)</name>
    <dbReference type="NCBI Taxonomy" id="267377"/>
    <lineage>
        <taxon>Archaea</taxon>
        <taxon>Methanobacteriati</taxon>
        <taxon>Methanobacteriota</taxon>
        <taxon>Methanomada group</taxon>
        <taxon>Methanococci</taxon>
        <taxon>Methanococcales</taxon>
        <taxon>Methanococcaceae</taxon>
        <taxon>Methanococcus</taxon>
    </lineage>
</organism>
<name>TRPD_METMP</name>
<evidence type="ECO:0000255" key="1">
    <source>
        <dbReference type="HAMAP-Rule" id="MF_00211"/>
    </source>
</evidence>
<proteinExistence type="inferred from homology"/>
<keyword id="KW-0028">Amino-acid biosynthesis</keyword>
<keyword id="KW-0057">Aromatic amino acid biosynthesis</keyword>
<keyword id="KW-0328">Glycosyltransferase</keyword>
<keyword id="KW-0460">Magnesium</keyword>
<keyword id="KW-0479">Metal-binding</keyword>
<keyword id="KW-1185">Reference proteome</keyword>
<keyword id="KW-0808">Transferase</keyword>
<keyword id="KW-0822">Tryptophan biosynthesis</keyword>
<feature type="chain" id="PRO_1000099819" description="Anthranilate phosphoribosyltransferase">
    <location>
        <begin position="1"/>
        <end position="321"/>
    </location>
</feature>
<feature type="binding site" evidence="1">
    <location>
        <position position="72"/>
    </location>
    <ligand>
        <name>5-phospho-alpha-D-ribose 1-diphosphate</name>
        <dbReference type="ChEBI" id="CHEBI:58017"/>
    </ligand>
</feature>
<feature type="binding site" evidence="1">
    <location>
        <position position="72"/>
    </location>
    <ligand>
        <name>anthranilate</name>
        <dbReference type="ChEBI" id="CHEBI:16567"/>
        <label>1</label>
    </ligand>
</feature>
<feature type="binding site" evidence="1">
    <location>
        <begin position="75"/>
        <end position="76"/>
    </location>
    <ligand>
        <name>5-phospho-alpha-D-ribose 1-diphosphate</name>
        <dbReference type="ChEBI" id="CHEBI:58017"/>
    </ligand>
</feature>
<feature type="binding site" evidence="1">
    <location>
        <position position="80"/>
    </location>
    <ligand>
        <name>5-phospho-alpha-D-ribose 1-diphosphate</name>
        <dbReference type="ChEBI" id="CHEBI:58017"/>
    </ligand>
</feature>
<feature type="binding site" evidence="1">
    <location>
        <begin position="82"/>
        <end position="85"/>
    </location>
    <ligand>
        <name>5-phospho-alpha-D-ribose 1-diphosphate</name>
        <dbReference type="ChEBI" id="CHEBI:58017"/>
    </ligand>
</feature>
<feature type="binding site" evidence="1">
    <location>
        <position position="84"/>
    </location>
    <ligand>
        <name>Mg(2+)</name>
        <dbReference type="ChEBI" id="CHEBI:18420"/>
        <label>1</label>
    </ligand>
</feature>
<feature type="binding site" evidence="1">
    <location>
        <begin position="99"/>
        <end position="107"/>
    </location>
    <ligand>
        <name>5-phospho-alpha-D-ribose 1-diphosphate</name>
        <dbReference type="ChEBI" id="CHEBI:58017"/>
    </ligand>
</feature>
<feature type="binding site" evidence="1">
    <location>
        <position position="102"/>
    </location>
    <ligand>
        <name>anthranilate</name>
        <dbReference type="ChEBI" id="CHEBI:16567"/>
        <label>1</label>
    </ligand>
</feature>
<feature type="binding site" evidence="1">
    <location>
        <position position="111"/>
    </location>
    <ligand>
        <name>5-phospho-alpha-D-ribose 1-diphosphate</name>
        <dbReference type="ChEBI" id="CHEBI:58017"/>
    </ligand>
</feature>
<feature type="binding site" evidence="1">
    <location>
        <position position="157"/>
    </location>
    <ligand>
        <name>anthranilate</name>
        <dbReference type="ChEBI" id="CHEBI:16567"/>
        <label>2</label>
    </ligand>
</feature>
<feature type="binding site" evidence="1">
    <location>
        <position position="216"/>
    </location>
    <ligand>
        <name>Mg(2+)</name>
        <dbReference type="ChEBI" id="CHEBI:18420"/>
        <label>2</label>
    </ligand>
</feature>
<feature type="binding site" evidence="1">
    <location>
        <position position="217"/>
    </location>
    <ligand>
        <name>Mg(2+)</name>
        <dbReference type="ChEBI" id="CHEBI:18420"/>
        <label>1</label>
    </ligand>
</feature>
<feature type="binding site" evidence="1">
    <location>
        <position position="217"/>
    </location>
    <ligand>
        <name>Mg(2+)</name>
        <dbReference type="ChEBI" id="CHEBI:18420"/>
        <label>2</label>
    </ligand>
</feature>
<dbReference type="EC" id="2.4.2.18" evidence="1"/>
<dbReference type="EMBL" id="BX950229">
    <property type="protein sequence ID" value="CAF30563.1"/>
    <property type="molecule type" value="Genomic_DNA"/>
</dbReference>
<dbReference type="RefSeq" id="WP_011170951.1">
    <property type="nucleotide sequence ID" value="NC_005791.1"/>
</dbReference>
<dbReference type="SMR" id="Q6LYI4"/>
<dbReference type="STRING" id="267377.MMP1007"/>
<dbReference type="EnsemblBacteria" id="CAF30563">
    <property type="protein sequence ID" value="CAF30563"/>
    <property type="gene ID" value="MMP1007"/>
</dbReference>
<dbReference type="GeneID" id="2762114"/>
<dbReference type="KEGG" id="mmp:MMP1007"/>
<dbReference type="PATRIC" id="fig|267377.15.peg.1036"/>
<dbReference type="eggNOG" id="arCOG02012">
    <property type="taxonomic scope" value="Archaea"/>
</dbReference>
<dbReference type="HOGENOM" id="CLU_034315_3_1_2"/>
<dbReference type="OrthoDB" id="8214at2157"/>
<dbReference type="UniPathway" id="UPA00035">
    <property type="reaction ID" value="UER00041"/>
</dbReference>
<dbReference type="Proteomes" id="UP000000590">
    <property type="component" value="Chromosome"/>
</dbReference>
<dbReference type="GO" id="GO:0005829">
    <property type="term" value="C:cytosol"/>
    <property type="evidence" value="ECO:0007669"/>
    <property type="project" value="TreeGrafter"/>
</dbReference>
<dbReference type="GO" id="GO:0004048">
    <property type="term" value="F:anthranilate phosphoribosyltransferase activity"/>
    <property type="evidence" value="ECO:0007669"/>
    <property type="project" value="UniProtKB-UniRule"/>
</dbReference>
<dbReference type="GO" id="GO:0000287">
    <property type="term" value="F:magnesium ion binding"/>
    <property type="evidence" value="ECO:0007669"/>
    <property type="project" value="UniProtKB-UniRule"/>
</dbReference>
<dbReference type="GO" id="GO:0000162">
    <property type="term" value="P:L-tryptophan biosynthetic process"/>
    <property type="evidence" value="ECO:0007669"/>
    <property type="project" value="UniProtKB-UniRule"/>
</dbReference>
<dbReference type="FunFam" id="3.40.1030.10:FF:000010">
    <property type="entry name" value="Anthranilate phosphoribosyltransferase"/>
    <property type="match status" value="1"/>
</dbReference>
<dbReference type="Gene3D" id="3.40.1030.10">
    <property type="entry name" value="Nucleoside phosphorylase/phosphoribosyltransferase catalytic domain"/>
    <property type="match status" value="1"/>
</dbReference>
<dbReference type="Gene3D" id="1.20.970.10">
    <property type="entry name" value="Transferase, Pyrimidine Nucleoside Phosphorylase, Chain C"/>
    <property type="match status" value="1"/>
</dbReference>
<dbReference type="HAMAP" id="MF_00211">
    <property type="entry name" value="TrpD"/>
    <property type="match status" value="1"/>
</dbReference>
<dbReference type="InterPro" id="IPR005940">
    <property type="entry name" value="Anthranilate_Pribosyl_Tfrase"/>
</dbReference>
<dbReference type="InterPro" id="IPR000312">
    <property type="entry name" value="Glycosyl_Trfase_fam3"/>
</dbReference>
<dbReference type="InterPro" id="IPR017459">
    <property type="entry name" value="Glycosyl_Trfase_fam3_N_dom"/>
</dbReference>
<dbReference type="InterPro" id="IPR036320">
    <property type="entry name" value="Glycosyl_Trfase_fam3_N_dom_sf"/>
</dbReference>
<dbReference type="InterPro" id="IPR035902">
    <property type="entry name" value="Nuc_phospho_transferase"/>
</dbReference>
<dbReference type="NCBIfam" id="TIGR01245">
    <property type="entry name" value="trpD"/>
    <property type="match status" value="1"/>
</dbReference>
<dbReference type="PANTHER" id="PTHR43285">
    <property type="entry name" value="ANTHRANILATE PHOSPHORIBOSYLTRANSFERASE"/>
    <property type="match status" value="1"/>
</dbReference>
<dbReference type="PANTHER" id="PTHR43285:SF2">
    <property type="entry name" value="ANTHRANILATE PHOSPHORIBOSYLTRANSFERASE"/>
    <property type="match status" value="1"/>
</dbReference>
<dbReference type="Pfam" id="PF02885">
    <property type="entry name" value="Glycos_trans_3N"/>
    <property type="match status" value="1"/>
</dbReference>
<dbReference type="Pfam" id="PF00591">
    <property type="entry name" value="Glycos_transf_3"/>
    <property type="match status" value="1"/>
</dbReference>
<dbReference type="SUPFAM" id="SSF52418">
    <property type="entry name" value="Nucleoside phosphorylase/phosphoribosyltransferase catalytic domain"/>
    <property type="match status" value="1"/>
</dbReference>
<dbReference type="SUPFAM" id="SSF47648">
    <property type="entry name" value="Nucleoside phosphorylase/phosphoribosyltransferase N-terminal domain"/>
    <property type="match status" value="1"/>
</dbReference>
<protein>
    <recommendedName>
        <fullName evidence="1">Anthranilate phosphoribosyltransferase</fullName>
        <ecNumber evidence="1">2.4.2.18</ecNumber>
    </recommendedName>
</protein>
<comment type="function">
    <text evidence="1">Catalyzes the transfer of the phosphoribosyl group of 5-phosphorylribose-1-pyrophosphate (PRPP) to anthranilate to yield N-(5'-phosphoribosyl)-anthranilate (PRA).</text>
</comment>
<comment type="catalytic activity">
    <reaction evidence="1">
        <text>N-(5-phospho-beta-D-ribosyl)anthranilate + diphosphate = 5-phospho-alpha-D-ribose 1-diphosphate + anthranilate</text>
        <dbReference type="Rhea" id="RHEA:11768"/>
        <dbReference type="ChEBI" id="CHEBI:16567"/>
        <dbReference type="ChEBI" id="CHEBI:18277"/>
        <dbReference type="ChEBI" id="CHEBI:33019"/>
        <dbReference type="ChEBI" id="CHEBI:58017"/>
        <dbReference type="EC" id="2.4.2.18"/>
    </reaction>
</comment>
<comment type="cofactor">
    <cofactor evidence="1">
        <name>Mg(2+)</name>
        <dbReference type="ChEBI" id="CHEBI:18420"/>
    </cofactor>
    <text evidence="1">Binds 2 magnesium ions per monomer.</text>
</comment>
<comment type="pathway">
    <text evidence="1">Amino-acid biosynthesis; L-tryptophan biosynthesis; L-tryptophan from chorismate: step 2/5.</text>
</comment>
<comment type="subunit">
    <text evidence="1">Homodimer.</text>
</comment>
<comment type="similarity">
    <text evidence="1">Belongs to the anthranilate phosphoribosyltransferase family.</text>
</comment>
<accession>Q6LYI4</accession>
<gene>
    <name evidence="1" type="primary">trpD</name>
    <name type="ordered locus">MMP1007</name>
</gene>
<sequence length="321" mass="34870">MLNKLIERENLSFEESYELFNVLLNESEMRIAAYLVALQTKGLTADEIAGFAKAMRDNAVKIDLGDVTDTCGTGGDGSKTINVSTAVSIILACFTKVAKHGNVSITSNSGSANVYKALGCKIPETPDDAKKSMDKTNFAFLFAQKYHPALKKIMPVRNELKVKTIFNILGPLANPANPKYQILGVNSSELCDNVAIALSKVGGIKKALVVYGNGLDELTPNGTSKITEYDGKFDTYEVTPKDFGLDYSKIIPCESPDESAKRLIDVFSGKINEDRNFILMNAAAALYTSEIASDFLDGVEIAKEAIESGKVLKKLEEIRNV</sequence>